<sequence length="424" mass="44087">MKHQWQQYQAILNAVVKPALGCTEPICAAYASAIAASMLTSEPESVSVHVSDNLYKNSMGVFVPGTGKIGLAIAAAVGAIGGNAEAGLEVLATIEADQVERAQAMIDAGNVSVSRTQTDEFIYCYVKAHSGDDVVTVEISGGHTQVVEKTLNGEIVFAKEVSATTSTAGICDGVDISIAGIYDYATQVSFEDIRFILDASELNTKLSAEGLANEYGLQVGRTIDKSIKDGFMSSDFANNILMHTAAASDARMGGASLPAMSNYGSGNQGIAATLPVVMTATHYQANDELLARALIMSHLGAIYIKSHYPPLSAFCGNTVTSAAAAMAMVYLAGGSYQQSCFAIQNVMSDCSGMVCDGAKSTCAMKVKTSTGSAVNAFMLAIQSTAAQAQGIVADDVEHTIRNIGQLVTLGMGNTDTTIIDIMSA</sequence>
<gene>
    <name type="ordered locus">Ssed_2537</name>
</gene>
<accession>A8FWC1</accession>
<feature type="chain" id="PRO_0000339851" description="UPF0597 protein Ssed_2537">
    <location>
        <begin position="1"/>
        <end position="424"/>
    </location>
</feature>
<protein>
    <recommendedName>
        <fullName evidence="1">UPF0597 protein Ssed_2537</fullName>
    </recommendedName>
</protein>
<dbReference type="EMBL" id="CP000821">
    <property type="protein sequence ID" value="ABV37144.1"/>
    <property type="molecule type" value="Genomic_DNA"/>
</dbReference>
<dbReference type="RefSeq" id="WP_012142877.1">
    <property type="nucleotide sequence ID" value="NC_009831.1"/>
</dbReference>
<dbReference type="SMR" id="A8FWC1"/>
<dbReference type="STRING" id="425104.Ssed_2537"/>
<dbReference type="KEGG" id="sse:Ssed_2537"/>
<dbReference type="eggNOG" id="COG3681">
    <property type="taxonomic scope" value="Bacteria"/>
</dbReference>
<dbReference type="HOGENOM" id="CLU_051840_0_0_6"/>
<dbReference type="OrthoDB" id="41906at2"/>
<dbReference type="Proteomes" id="UP000002015">
    <property type="component" value="Chromosome"/>
</dbReference>
<dbReference type="GO" id="GO:0080146">
    <property type="term" value="F:L-cysteine desulfhydrase activity"/>
    <property type="evidence" value="ECO:0007669"/>
    <property type="project" value="TreeGrafter"/>
</dbReference>
<dbReference type="GO" id="GO:0019450">
    <property type="term" value="P:L-cysteine catabolic process to pyruvate"/>
    <property type="evidence" value="ECO:0007669"/>
    <property type="project" value="TreeGrafter"/>
</dbReference>
<dbReference type="HAMAP" id="MF_01845">
    <property type="entry name" value="UPF0597"/>
    <property type="match status" value="1"/>
</dbReference>
<dbReference type="InterPro" id="IPR005130">
    <property type="entry name" value="Ser_deHydtase-like_asu"/>
</dbReference>
<dbReference type="InterPro" id="IPR021144">
    <property type="entry name" value="UPF0597"/>
</dbReference>
<dbReference type="PANTHER" id="PTHR30501">
    <property type="entry name" value="UPF0597 PROTEIN YHAM"/>
    <property type="match status" value="1"/>
</dbReference>
<dbReference type="PANTHER" id="PTHR30501:SF2">
    <property type="entry name" value="UPF0597 PROTEIN YHAM"/>
    <property type="match status" value="1"/>
</dbReference>
<dbReference type="Pfam" id="PF03313">
    <property type="entry name" value="SDH_alpha"/>
    <property type="match status" value="1"/>
</dbReference>
<dbReference type="PIRSF" id="PIRSF006054">
    <property type="entry name" value="UCP006054"/>
    <property type="match status" value="1"/>
</dbReference>
<name>Y2537_SHESH</name>
<organism>
    <name type="scientific">Shewanella sediminis (strain HAW-EB3)</name>
    <dbReference type="NCBI Taxonomy" id="425104"/>
    <lineage>
        <taxon>Bacteria</taxon>
        <taxon>Pseudomonadati</taxon>
        <taxon>Pseudomonadota</taxon>
        <taxon>Gammaproteobacteria</taxon>
        <taxon>Alteromonadales</taxon>
        <taxon>Shewanellaceae</taxon>
        <taxon>Shewanella</taxon>
    </lineage>
</organism>
<reference key="1">
    <citation type="submission" date="2007-08" db="EMBL/GenBank/DDBJ databases">
        <title>Complete sequence of Shewanella sediminis HAW-EB3.</title>
        <authorList>
            <consortium name="US DOE Joint Genome Institute"/>
            <person name="Copeland A."/>
            <person name="Lucas S."/>
            <person name="Lapidus A."/>
            <person name="Barry K."/>
            <person name="Glavina del Rio T."/>
            <person name="Dalin E."/>
            <person name="Tice H."/>
            <person name="Pitluck S."/>
            <person name="Chertkov O."/>
            <person name="Brettin T."/>
            <person name="Bruce D."/>
            <person name="Detter J.C."/>
            <person name="Han C."/>
            <person name="Schmutz J."/>
            <person name="Larimer F."/>
            <person name="Land M."/>
            <person name="Hauser L."/>
            <person name="Kyrpides N."/>
            <person name="Kim E."/>
            <person name="Zhao J.-S."/>
            <person name="Richardson P."/>
        </authorList>
    </citation>
    <scope>NUCLEOTIDE SEQUENCE [LARGE SCALE GENOMIC DNA]</scope>
    <source>
        <strain>HAW-EB3</strain>
    </source>
</reference>
<evidence type="ECO:0000255" key="1">
    <source>
        <dbReference type="HAMAP-Rule" id="MF_01845"/>
    </source>
</evidence>
<proteinExistence type="inferred from homology"/>
<comment type="similarity">
    <text evidence="1">Belongs to the UPF0597 family.</text>
</comment>
<keyword id="KW-1185">Reference proteome</keyword>